<gene>
    <name type="primary">Klhl1</name>
</gene>
<accession>Q9JI74</accession>
<accession>Q505E9</accession>
<feature type="chain" id="PRO_0000119100" description="Kelch-like protein 1">
    <location>
        <begin position="1"/>
        <end position="751"/>
    </location>
</feature>
<feature type="domain" description="BTB" evidence="1">
    <location>
        <begin position="215"/>
        <end position="282"/>
    </location>
</feature>
<feature type="repeat" description="Kelch 1">
    <location>
        <begin position="463"/>
        <end position="509"/>
    </location>
</feature>
<feature type="repeat" description="Kelch 2">
    <location>
        <begin position="510"/>
        <end position="556"/>
    </location>
</feature>
<feature type="repeat" description="Kelch 3">
    <location>
        <begin position="558"/>
        <end position="603"/>
    </location>
</feature>
<feature type="repeat" description="Kelch 4">
    <location>
        <begin position="604"/>
        <end position="650"/>
    </location>
</feature>
<feature type="repeat" description="Kelch 5">
    <location>
        <begin position="652"/>
        <end position="703"/>
    </location>
</feature>
<feature type="repeat" description="Kelch 6">
    <location>
        <begin position="704"/>
        <end position="750"/>
    </location>
</feature>
<feature type="region of interest" description="Disordered" evidence="2">
    <location>
        <begin position="25"/>
        <end position="54"/>
    </location>
</feature>
<feature type="region of interest" description="Disordered" evidence="2">
    <location>
        <begin position="69"/>
        <end position="98"/>
    </location>
</feature>
<feature type="region of interest" description="Disordered" evidence="2">
    <location>
        <begin position="157"/>
        <end position="184"/>
    </location>
</feature>
<feature type="compositionally biased region" description="Low complexity" evidence="2">
    <location>
        <begin position="25"/>
        <end position="36"/>
    </location>
</feature>
<feature type="compositionally biased region" description="Low complexity" evidence="2">
    <location>
        <begin position="74"/>
        <end position="90"/>
    </location>
</feature>
<feature type="compositionally biased region" description="Polar residues" evidence="2">
    <location>
        <begin position="170"/>
        <end position="184"/>
    </location>
</feature>
<feature type="sequence conflict" description="In Ref. 1; AAF81717." evidence="3" ref="1">
    <original>S</original>
    <variation>P</variation>
    <location>
        <position position="139"/>
    </location>
</feature>
<feature type="sequence conflict" description="In Ref. 1; AAF81717." evidence="3" ref="1">
    <original>E</original>
    <variation>Q</variation>
    <location>
        <position position="142"/>
    </location>
</feature>
<feature type="sequence conflict" description="In Ref. 1; AAF81717." evidence="3" ref="1">
    <original>H</original>
    <variation>R</variation>
    <location>
        <position position="196"/>
    </location>
</feature>
<feature type="sequence conflict" description="In Ref. 1; AAF81717." evidence="3" ref="1">
    <original>A</original>
    <variation>P</variation>
    <location>
        <position position="634"/>
    </location>
</feature>
<feature type="sequence conflict" description="In Ref. 1; AAF81717." evidence="3" ref="1">
    <original>R</original>
    <variation>K</variation>
    <location>
        <position position="639"/>
    </location>
</feature>
<feature type="sequence conflict" description="In Ref. 1; AAF81717." evidence="3" ref="1">
    <original>D</original>
    <variation>E</variation>
    <location>
        <position position="677"/>
    </location>
</feature>
<organism>
    <name type="scientific">Mus musculus</name>
    <name type="common">Mouse</name>
    <dbReference type="NCBI Taxonomy" id="10090"/>
    <lineage>
        <taxon>Eukaryota</taxon>
        <taxon>Metazoa</taxon>
        <taxon>Chordata</taxon>
        <taxon>Craniata</taxon>
        <taxon>Vertebrata</taxon>
        <taxon>Euteleostomi</taxon>
        <taxon>Mammalia</taxon>
        <taxon>Eutheria</taxon>
        <taxon>Euarchontoglires</taxon>
        <taxon>Glires</taxon>
        <taxon>Rodentia</taxon>
        <taxon>Myomorpha</taxon>
        <taxon>Muroidea</taxon>
        <taxon>Muridae</taxon>
        <taxon>Murinae</taxon>
        <taxon>Mus</taxon>
        <taxon>Mus</taxon>
    </lineage>
</organism>
<sequence length="751" mass="82892">MSGSGRKDFDVKHILRLRWKLFSHPSPASSSPAGGSCLQQDSGGGSFEHWGPSQSRLLKNQEKGSVSAFWKKPSSSSSSSSSSSSSASSSPFNPLNGTLLPVATRLQQGAPGQGTQQPARTLFYVESLEEEVVTGMDFSGPEDKGLALKELQAEPASSIQATGEGCGHRLTSTNHSLTPQSDLDSSSSEEFYQAVHHAEQSFRKMENYLKQQQLCDVILIVGNRKIPAHRLVLSSVSDYFAAMFTSDVCEAKQEEIKMEGIDPNALWDLVQFAYTGCLELKEDTIENLLAAACLLQLPQVVEVCCHFLMKLLHPSNCLGIRAFADAQGCIELMKVAHSYTMENIMEVIRNQEFLLLPAEELHKLLASDDVNVPDEETIFHALMMWVKYDMQRRCSDLSMLLAFIRLPLLPPQILADLENHALFKNDLECQKLILEAMKYHLLPERRTLMQSPRTKPRKSTVGTLYAVGGMDNNKGATTIEKYDLRTNLWIQAGMMNGRRLQFGVAVIDDKLFVIGGRDGLKTLNTVECYNPKTKTWTVLPPMSTHRHGLGVTVLEGPIYAVGGHDGWSYLNTVERWDPQSQQWTYVASMSIARSTVGVAALNGKLYSVGGRDGSSCLSSMEYYDPHTNKWSMCAPMCKRRGGVGVATCDGFLYAVGGHDAPASNHCSRLLDYVERYDPKTDTWTMVAPLSMPRDAVGVCLLGDRLYAVGGYDGQTYLNTMESYDPQTNEWTQMASLNIGRAGACVVVIKQP</sequence>
<dbReference type="EMBL" id="AF252281">
    <property type="protein sequence ID" value="AAF81717.1"/>
    <property type="molecule type" value="mRNA"/>
</dbReference>
<dbReference type="EMBL" id="AC131920">
    <property type="status" value="NOT_ANNOTATED_CDS"/>
    <property type="molecule type" value="Genomic_DNA"/>
</dbReference>
<dbReference type="EMBL" id="AC131989">
    <property type="status" value="NOT_ANNOTATED_CDS"/>
    <property type="molecule type" value="Genomic_DNA"/>
</dbReference>
<dbReference type="EMBL" id="AC154580">
    <property type="status" value="NOT_ANNOTATED_CDS"/>
    <property type="molecule type" value="Genomic_DNA"/>
</dbReference>
<dbReference type="EMBL" id="CT025590">
    <property type="status" value="NOT_ANNOTATED_CDS"/>
    <property type="molecule type" value="Genomic_DNA"/>
</dbReference>
<dbReference type="EMBL" id="BC094584">
    <property type="protein sequence ID" value="AAH94584.1"/>
    <property type="molecule type" value="mRNA"/>
</dbReference>
<dbReference type="CCDS" id="CCDS27308.1"/>
<dbReference type="RefSeq" id="NP_444335.2">
    <property type="nucleotide sequence ID" value="NM_053105.3"/>
</dbReference>
<dbReference type="SMR" id="Q9JI74"/>
<dbReference type="BioGRID" id="220238">
    <property type="interactions" value="12"/>
</dbReference>
<dbReference type="FunCoup" id="Q9JI74">
    <property type="interactions" value="44"/>
</dbReference>
<dbReference type="STRING" id="10090.ENSMUSP00000022666"/>
<dbReference type="GlyGen" id="Q9JI74">
    <property type="glycosylation" value="1 site, 1 N-linked glycan (1 site)"/>
</dbReference>
<dbReference type="iPTMnet" id="Q9JI74"/>
<dbReference type="PhosphoSitePlus" id="Q9JI74"/>
<dbReference type="jPOST" id="Q9JI74"/>
<dbReference type="PaxDb" id="10090-ENSMUSP00000022666"/>
<dbReference type="ProteomicsDB" id="263657"/>
<dbReference type="Antibodypedia" id="9985">
    <property type="antibodies" value="269 antibodies from 30 providers"/>
</dbReference>
<dbReference type="DNASU" id="93688"/>
<dbReference type="Ensembl" id="ENSMUST00000022666.9">
    <property type="protein sequence ID" value="ENSMUSP00000022666.8"/>
    <property type="gene ID" value="ENSMUSG00000022076.11"/>
</dbReference>
<dbReference type="GeneID" id="93688"/>
<dbReference type="KEGG" id="mmu:93688"/>
<dbReference type="UCSC" id="uc007uuq.1">
    <property type="organism name" value="mouse"/>
</dbReference>
<dbReference type="AGR" id="MGI:2136335"/>
<dbReference type="CTD" id="57626"/>
<dbReference type="MGI" id="MGI:2136335">
    <property type="gene designation" value="Klhl1"/>
</dbReference>
<dbReference type="VEuPathDB" id="HostDB:ENSMUSG00000022076"/>
<dbReference type="eggNOG" id="KOG4441">
    <property type="taxonomic scope" value="Eukaryota"/>
</dbReference>
<dbReference type="GeneTree" id="ENSGT00940000160425"/>
<dbReference type="HOGENOM" id="CLU_004253_12_0_1"/>
<dbReference type="InParanoid" id="Q9JI74"/>
<dbReference type="OMA" id="GFEHWGP"/>
<dbReference type="OrthoDB" id="45365at2759"/>
<dbReference type="PhylomeDB" id="Q9JI74"/>
<dbReference type="TreeFam" id="TF329218"/>
<dbReference type="BioGRID-ORCS" id="93688">
    <property type="hits" value="1 hit in 77 CRISPR screens"/>
</dbReference>
<dbReference type="ChiTaRS" id="Klhl1">
    <property type="organism name" value="mouse"/>
</dbReference>
<dbReference type="PRO" id="PR:Q9JI74"/>
<dbReference type="Proteomes" id="UP000000589">
    <property type="component" value="Chromosome 14"/>
</dbReference>
<dbReference type="RNAct" id="Q9JI74">
    <property type="molecule type" value="protein"/>
</dbReference>
<dbReference type="Bgee" id="ENSMUSG00000022076">
    <property type="expression patterns" value="Expressed in ventral tegmental area and 65 other cell types or tissues"/>
</dbReference>
<dbReference type="GO" id="GO:0005737">
    <property type="term" value="C:cytoplasm"/>
    <property type="evidence" value="ECO:0000250"/>
    <property type="project" value="UniProtKB"/>
</dbReference>
<dbReference type="GO" id="GO:0005856">
    <property type="term" value="C:cytoskeleton"/>
    <property type="evidence" value="ECO:0007669"/>
    <property type="project" value="UniProtKB-SubCell"/>
</dbReference>
<dbReference type="GO" id="GO:0030425">
    <property type="term" value="C:dendrite"/>
    <property type="evidence" value="ECO:0000314"/>
    <property type="project" value="MGI"/>
</dbReference>
<dbReference type="GO" id="GO:0043025">
    <property type="term" value="C:neuronal cell body"/>
    <property type="evidence" value="ECO:0000314"/>
    <property type="project" value="MGI"/>
</dbReference>
<dbReference type="GO" id="GO:0003779">
    <property type="term" value="F:actin binding"/>
    <property type="evidence" value="ECO:0007669"/>
    <property type="project" value="UniProtKB-KW"/>
</dbReference>
<dbReference type="GO" id="GO:0007628">
    <property type="term" value="P:adult walking behavior"/>
    <property type="evidence" value="ECO:0000315"/>
    <property type="project" value="MGI"/>
</dbReference>
<dbReference type="GO" id="GO:0021680">
    <property type="term" value="P:cerebellar Purkinje cell layer development"/>
    <property type="evidence" value="ECO:0000315"/>
    <property type="project" value="MGI"/>
</dbReference>
<dbReference type="GO" id="GO:0016358">
    <property type="term" value="P:dendrite development"/>
    <property type="evidence" value="ECO:0000315"/>
    <property type="project" value="MGI"/>
</dbReference>
<dbReference type="GO" id="GO:0007626">
    <property type="term" value="P:locomotory behavior"/>
    <property type="evidence" value="ECO:0000315"/>
    <property type="project" value="MGI"/>
</dbReference>
<dbReference type="CDD" id="cd18509">
    <property type="entry name" value="BACK_KLHL1"/>
    <property type="match status" value="1"/>
</dbReference>
<dbReference type="CDD" id="cd18335">
    <property type="entry name" value="BTB_POZ_KLHL1"/>
    <property type="match status" value="1"/>
</dbReference>
<dbReference type="FunFam" id="1.25.40.420:FF:000001">
    <property type="entry name" value="Kelch-like family member 12"/>
    <property type="match status" value="1"/>
</dbReference>
<dbReference type="FunFam" id="2.120.10.80:FF:000063">
    <property type="entry name" value="Kelch-like protein 4 isoform 1"/>
    <property type="match status" value="1"/>
</dbReference>
<dbReference type="FunFam" id="2.120.10.80:FF:000086">
    <property type="entry name" value="Kelch-like protein 4 isoform 1"/>
    <property type="match status" value="1"/>
</dbReference>
<dbReference type="FunFam" id="3.30.710.10:FF:000027">
    <property type="entry name" value="Kelch-like protein 4 isoform 1"/>
    <property type="match status" value="1"/>
</dbReference>
<dbReference type="Gene3D" id="1.25.40.420">
    <property type="match status" value="1"/>
</dbReference>
<dbReference type="Gene3D" id="2.120.10.80">
    <property type="entry name" value="Kelch-type beta propeller"/>
    <property type="match status" value="2"/>
</dbReference>
<dbReference type="Gene3D" id="3.30.710.10">
    <property type="entry name" value="Potassium Channel Kv1.1, Chain A"/>
    <property type="match status" value="1"/>
</dbReference>
<dbReference type="InterPro" id="IPR011705">
    <property type="entry name" value="BACK"/>
</dbReference>
<dbReference type="InterPro" id="IPR000210">
    <property type="entry name" value="BTB/POZ_dom"/>
</dbReference>
<dbReference type="InterPro" id="IPR015915">
    <property type="entry name" value="Kelch-typ_b-propeller"/>
</dbReference>
<dbReference type="InterPro" id="IPR006652">
    <property type="entry name" value="Kelch_1"/>
</dbReference>
<dbReference type="InterPro" id="IPR011333">
    <property type="entry name" value="SKP1/BTB/POZ_sf"/>
</dbReference>
<dbReference type="PANTHER" id="PTHR24412">
    <property type="entry name" value="KELCH PROTEIN"/>
    <property type="match status" value="1"/>
</dbReference>
<dbReference type="PANTHER" id="PTHR24412:SF441">
    <property type="entry name" value="KELCH-LIKE PROTEIN 28"/>
    <property type="match status" value="1"/>
</dbReference>
<dbReference type="Pfam" id="PF07707">
    <property type="entry name" value="BACK"/>
    <property type="match status" value="1"/>
</dbReference>
<dbReference type="Pfam" id="PF00651">
    <property type="entry name" value="BTB"/>
    <property type="match status" value="1"/>
</dbReference>
<dbReference type="Pfam" id="PF01344">
    <property type="entry name" value="Kelch_1"/>
    <property type="match status" value="6"/>
</dbReference>
<dbReference type="SMART" id="SM00875">
    <property type="entry name" value="BACK"/>
    <property type="match status" value="1"/>
</dbReference>
<dbReference type="SMART" id="SM00225">
    <property type="entry name" value="BTB"/>
    <property type="match status" value="1"/>
</dbReference>
<dbReference type="SMART" id="SM00612">
    <property type="entry name" value="Kelch"/>
    <property type="match status" value="6"/>
</dbReference>
<dbReference type="SUPFAM" id="SSF117281">
    <property type="entry name" value="Kelch motif"/>
    <property type="match status" value="2"/>
</dbReference>
<dbReference type="SUPFAM" id="SSF54695">
    <property type="entry name" value="POZ domain"/>
    <property type="match status" value="1"/>
</dbReference>
<dbReference type="PROSITE" id="PS50097">
    <property type="entry name" value="BTB"/>
    <property type="match status" value="1"/>
</dbReference>
<evidence type="ECO:0000255" key="1">
    <source>
        <dbReference type="PROSITE-ProRule" id="PRU00037"/>
    </source>
</evidence>
<evidence type="ECO:0000256" key="2">
    <source>
        <dbReference type="SAM" id="MobiDB-lite"/>
    </source>
</evidence>
<evidence type="ECO:0000305" key="3"/>
<proteinExistence type="evidence at transcript level"/>
<protein>
    <recommendedName>
        <fullName>Kelch-like protein 1</fullName>
    </recommendedName>
</protein>
<comment type="function">
    <text>May play a role in organizing the actin cytoskeleton of the brain cells.</text>
</comment>
<comment type="subcellular location">
    <subcellularLocation>
        <location>Cytoplasm</location>
        <location>Cytoskeleton</location>
    </subcellularLocation>
</comment>
<comment type="tissue specificity">
    <text>Highly expressed in brain.</text>
</comment>
<name>KLHL1_MOUSE</name>
<reference key="1">
    <citation type="journal article" date="2000" name="Hum. Mol. Genet.">
        <title>The SCA8 transcript is an antisense RNA to a brain-specific transcript encoding a novel actin-binding protein (KLHL1).</title>
        <authorList>
            <person name="Koob M.D."/>
            <person name="Nemes J.P."/>
            <person name="Benzow K.A."/>
        </authorList>
    </citation>
    <scope>NUCLEOTIDE SEQUENCE [MRNA]</scope>
</reference>
<reference key="2">
    <citation type="journal article" date="2009" name="PLoS Biol.">
        <title>Lineage-specific biology revealed by a finished genome assembly of the mouse.</title>
        <authorList>
            <person name="Church D.M."/>
            <person name="Goodstadt L."/>
            <person name="Hillier L.W."/>
            <person name="Zody M.C."/>
            <person name="Goldstein S."/>
            <person name="She X."/>
            <person name="Bult C.J."/>
            <person name="Agarwala R."/>
            <person name="Cherry J.L."/>
            <person name="DiCuccio M."/>
            <person name="Hlavina W."/>
            <person name="Kapustin Y."/>
            <person name="Meric P."/>
            <person name="Maglott D."/>
            <person name="Birtle Z."/>
            <person name="Marques A.C."/>
            <person name="Graves T."/>
            <person name="Zhou S."/>
            <person name="Teague B."/>
            <person name="Potamousis K."/>
            <person name="Churas C."/>
            <person name="Place M."/>
            <person name="Herschleb J."/>
            <person name="Runnheim R."/>
            <person name="Forrest D."/>
            <person name="Amos-Landgraf J."/>
            <person name="Schwartz D.C."/>
            <person name="Cheng Z."/>
            <person name="Lindblad-Toh K."/>
            <person name="Eichler E.E."/>
            <person name="Ponting C.P."/>
        </authorList>
    </citation>
    <scope>NUCLEOTIDE SEQUENCE [LARGE SCALE GENOMIC DNA]</scope>
    <source>
        <strain>C57BL/6J</strain>
    </source>
</reference>
<reference key="3">
    <citation type="journal article" date="2004" name="Genome Res.">
        <title>The status, quality, and expansion of the NIH full-length cDNA project: the Mammalian Gene Collection (MGC).</title>
        <authorList>
            <consortium name="The MGC Project Team"/>
        </authorList>
    </citation>
    <scope>NUCLEOTIDE SEQUENCE [LARGE SCALE MRNA]</scope>
    <source>
        <strain>C57BL/6J</strain>
        <tissue>Eye</tissue>
    </source>
</reference>
<keyword id="KW-0009">Actin-binding</keyword>
<keyword id="KW-0963">Cytoplasm</keyword>
<keyword id="KW-0206">Cytoskeleton</keyword>
<keyword id="KW-0880">Kelch repeat</keyword>
<keyword id="KW-1185">Reference proteome</keyword>
<keyword id="KW-0677">Repeat</keyword>